<keyword id="KW-0285">Flavoprotein</keyword>
<keyword id="KW-0288">FMN</keyword>
<keyword id="KW-0520">NAD</keyword>
<keyword id="KW-0521">NADP</keyword>
<keyword id="KW-0560">Oxidoreductase</keyword>
<dbReference type="EC" id="1.1.1.298" evidence="1"/>
<dbReference type="EMBL" id="AM286415">
    <property type="protein sequence ID" value="CAL12025.1"/>
    <property type="molecule type" value="Genomic_DNA"/>
</dbReference>
<dbReference type="RefSeq" id="WP_011816247.1">
    <property type="nucleotide sequence ID" value="NC_008800.1"/>
</dbReference>
<dbReference type="RefSeq" id="YP_001006201.1">
    <property type="nucleotide sequence ID" value="NC_008800.1"/>
</dbReference>
<dbReference type="SMR" id="A1JMW8"/>
<dbReference type="KEGG" id="yen:YE1946"/>
<dbReference type="PATRIC" id="fig|393305.7.peg.2103"/>
<dbReference type="eggNOG" id="COG0778">
    <property type="taxonomic scope" value="Bacteria"/>
</dbReference>
<dbReference type="HOGENOM" id="CLU_084441_0_0_6"/>
<dbReference type="OrthoDB" id="9784375at2"/>
<dbReference type="Proteomes" id="UP000000642">
    <property type="component" value="Chromosome"/>
</dbReference>
<dbReference type="GO" id="GO:0035527">
    <property type="term" value="F:3-hydroxypropionate dehydrogenase (NADP+) activity"/>
    <property type="evidence" value="ECO:0007669"/>
    <property type="project" value="UniProtKB-UniRule"/>
</dbReference>
<dbReference type="GO" id="GO:0019740">
    <property type="term" value="P:nitrogen utilization"/>
    <property type="evidence" value="ECO:0007669"/>
    <property type="project" value="UniProtKB-UniRule"/>
</dbReference>
<dbReference type="GO" id="GO:0006212">
    <property type="term" value="P:uracil catabolic process"/>
    <property type="evidence" value="ECO:0007669"/>
    <property type="project" value="UniProtKB-UniRule"/>
</dbReference>
<dbReference type="CDD" id="cd02148">
    <property type="entry name" value="RutE-like"/>
    <property type="match status" value="1"/>
</dbReference>
<dbReference type="Gene3D" id="3.40.109.10">
    <property type="entry name" value="NADH Oxidase"/>
    <property type="match status" value="1"/>
</dbReference>
<dbReference type="HAMAP" id="MF_01204">
    <property type="entry name" value="Oxidoreductase_RutE_HadB"/>
    <property type="match status" value="1"/>
</dbReference>
<dbReference type="InterPro" id="IPR029479">
    <property type="entry name" value="Nitroreductase"/>
</dbReference>
<dbReference type="InterPro" id="IPR000415">
    <property type="entry name" value="Nitroreductase-like"/>
</dbReference>
<dbReference type="InterPro" id="IPR050461">
    <property type="entry name" value="Nitroreductase_HadB/RutE"/>
</dbReference>
<dbReference type="InterPro" id="IPR023936">
    <property type="entry name" value="RutE-like"/>
</dbReference>
<dbReference type="NCBIfam" id="NF003768">
    <property type="entry name" value="PRK05365.1"/>
    <property type="match status" value="1"/>
</dbReference>
<dbReference type="PANTHER" id="PTHR43543">
    <property type="entry name" value="MALONIC SEMIALDEHYDE REDUCTASE RUTE-RELATED"/>
    <property type="match status" value="1"/>
</dbReference>
<dbReference type="PANTHER" id="PTHR43543:SF1">
    <property type="entry name" value="MALONIC SEMIALDEHYDE REDUCTASE RUTE-RELATED"/>
    <property type="match status" value="1"/>
</dbReference>
<dbReference type="Pfam" id="PF00881">
    <property type="entry name" value="Nitroreductase"/>
    <property type="match status" value="1"/>
</dbReference>
<dbReference type="SUPFAM" id="SSF55469">
    <property type="entry name" value="FMN-dependent nitroreductase-like"/>
    <property type="match status" value="1"/>
</dbReference>
<gene>
    <name evidence="1" type="primary">rutE</name>
    <name type="ordered locus">YE1946</name>
</gene>
<name>RUTE_YERE8</name>
<sequence>MAQILTPDALATLFTDARTHNGWLDKPVEDALLKQAYHLARMGPTSANCCPARFVFICSSEAKERLKPALSSGNLAKTLQAPVTAIVAYDPVFYDALPKLFPQSDARSWFTSSPELATETAFRNSSLQAAYLIIACRALGLDTGPMSGFNNAQVDEIFLAEKGWKSNLLVNIGYGDINKLYERAPRLAFDEACQVL</sequence>
<accession>A1JMW8</accession>
<reference key="1">
    <citation type="journal article" date="2006" name="PLoS Genet.">
        <title>The complete genome sequence and comparative genome analysis of the high pathogenicity Yersinia enterocolitica strain 8081.</title>
        <authorList>
            <person name="Thomson N.R."/>
            <person name="Howard S."/>
            <person name="Wren B.W."/>
            <person name="Holden M.T.G."/>
            <person name="Crossman L."/>
            <person name="Challis G.L."/>
            <person name="Churcher C."/>
            <person name="Mungall K."/>
            <person name="Brooks K."/>
            <person name="Chillingworth T."/>
            <person name="Feltwell T."/>
            <person name="Abdellah Z."/>
            <person name="Hauser H."/>
            <person name="Jagels K."/>
            <person name="Maddison M."/>
            <person name="Moule S."/>
            <person name="Sanders M."/>
            <person name="Whitehead S."/>
            <person name="Quail M.A."/>
            <person name="Dougan G."/>
            <person name="Parkhill J."/>
            <person name="Prentice M.B."/>
        </authorList>
    </citation>
    <scope>NUCLEOTIDE SEQUENCE [LARGE SCALE GENOMIC DNA]</scope>
    <source>
        <strain>NCTC 13174 / 8081</strain>
    </source>
</reference>
<comment type="function">
    <text evidence="1">May reduce toxic product malonic semialdehyde to 3-hydroxypropionic acid, which is excreted.</text>
</comment>
<comment type="catalytic activity">
    <reaction evidence="1">
        <text>3-hydroxypropanoate + NADP(+) = 3-oxopropanoate + NADPH + H(+)</text>
        <dbReference type="Rhea" id="RHEA:26438"/>
        <dbReference type="ChEBI" id="CHEBI:15378"/>
        <dbReference type="ChEBI" id="CHEBI:16510"/>
        <dbReference type="ChEBI" id="CHEBI:33190"/>
        <dbReference type="ChEBI" id="CHEBI:57783"/>
        <dbReference type="ChEBI" id="CHEBI:58349"/>
        <dbReference type="EC" id="1.1.1.298"/>
    </reaction>
</comment>
<comment type="cofactor">
    <cofactor evidence="1">
        <name>FMN</name>
        <dbReference type="ChEBI" id="CHEBI:58210"/>
    </cofactor>
</comment>
<comment type="similarity">
    <text evidence="1">Belongs to the nitroreductase family. HadB/RutE subfamily.</text>
</comment>
<protein>
    <recommendedName>
        <fullName evidence="1">Probable malonic semialdehyde reductase RutE</fullName>
        <ecNumber evidence="1">1.1.1.298</ecNumber>
    </recommendedName>
</protein>
<evidence type="ECO:0000255" key="1">
    <source>
        <dbReference type="HAMAP-Rule" id="MF_01204"/>
    </source>
</evidence>
<feature type="chain" id="PRO_1000066153" description="Probable malonic semialdehyde reductase RutE">
    <location>
        <begin position="1"/>
        <end position="196"/>
    </location>
</feature>
<organism>
    <name type="scientific">Yersinia enterocolitica serotype O:8 / biotype 1B (strain NCTC 13174 / 8081)</name>
    <dbReference type="NCBI Taxonomy" id="393305"/>
    <lineage>
        <taxon>Bacteria</taxon>
        <taxon>Pseudomonadati</taxon>
        <taxon>Pseudomonadota</taxon>
        <taxon>Gammaproteobacteria</taxon>
        <taxon>Enterobacterales</taxon>
        <taxon>Yersiniaceae</taxon>
        <taxon>Yersinia</taxon>
    </lineage>
</organism>
<proteinExistence type="inferred from homology"/>